<protein>
    <recommendedName>
        <fullName>Metalloendopeptidase OPG085</fullName>
        <ecNumber evidence="1">3.4.24.-</ecNumber>
    </recommendedName>
    <alternativeName>
        <fullName>Metalloendopeptidase G1</fullName>
    </alternativeName>
</protein>
<comment type="function">
    <text evidence="1">Probably involved in maturation of some viral proteins by processing them preferentially at Ala-Gly-|-Ser/Thr/Lys motifs. Does not seem to be responsible for the cleavage of major core proteins.</text>
</comment>
<comment type="cofactor">
    <cofactor evidence="1">
        <name>Zn(2+)</name>
        <dbReference type="ChEBI" id="CHEBI:29105"/>
    </cofactor>
    <text evidence="1">Binds 1 zinc ion.</text>
</comment>
<comment type="subcellular location">
    <subcellularLocation>
        <location evidence="1">Virion</location>
    </subcellularLocation>
    <text evidence="1">Localizes to the virion core.</text>
</comment>
<comment type="PTM">
    <text evidence="1">Undergoes proteolytic processing during the course of infection. May be cleaved into 46 kDa and 22 kDa products (Potential).</text>
</comment>
<comment type="similarity">
    <text evidence="3">Belongs to the peptidase M44 family.</text>
</comment>
<proteinExistence type="inferred from homology"/>
<organism>
    <name type="scientific">Vaccinia virus (strain Tian Tan)</name>
    <name type="common">VACV</name>
    <dbReference type="NCBI Taxonomy" id="10253"/>
    <lineage>
        <taxon>Viruses</taxon>
        <taxon>Varidnaviria</taxon>
        <taxon>Bamfordvirae</taxon>
        <taxon>Nucleocytoviricota</taxon>
        <taxon>Pokkesviricetes</taxon>
        <taxon>Chitovirales</taxon>
        <taxon>Poxviridae</taxon>
        <taxon>Chordopoxvirinae</taxon>
        <taxon>Orthopoxvirus</taxon>
        <taxon>Vaccinia virus</taxon>
    </lineage>
</organism>
<evidence type="ECO:0000250" key="1">
    <source>
        <dbReference type="UniProtKB" id="P16713"/>
    </source>
</evidence>
<evidence type="ECO:0000255" key="2"/>
<evidence type="ECO:0000305" key="3"/>
<keyword id="KW-0378">Hydrolase</keyword>
<keyword id="KW-0426">Late protein</keyword>
<keyword id="KW-0479">Metal-binding</keyword>
<keyword id="KW-0482">Metalloprotease</keyword>
<keyword id="KW-0645">Protease</keyword>
<keyword id="KW-0946">Virion</keyword>
<keyword id="KW-0862">Zinc</keyword>
<sequence length="591" mass="67980">MIVLPNKVRIFINDRMKKDIYLGISNFGFENDIDEILGIAHLLEHLLISFDSTNFLANASTSRSYMSFWCKSINSATESDAIRTLVSWFFSNGKLKDNFSLSSIRFHIKELENEYYFRNEVFHCMDILTFLSGGDLYNGGRIDMIDNLNIVRDMLVNRMQRISGSNIVIFVKRLGPGTLDFFKQTFGSLPACPEIIPSSIPVSTNGKIVMTPSPFYTVMVKINPTLDNILGILYLYETYHLIDYETIGNQLYLTVSFIDETEYESFLRGEAILQISQCQRINMNYSDDYMMNIYLNFPWLSHDLYDYITRINDDSKSILISLTNEIYASIINRDIIVIYPNFSKAMCNTRDTQQHPIVVLDATNDGLIKKPYRSIPLMKRLTSNEIFIRYGDASLMDMITLSLSKQDISLKRNAEGIRVKHSFSADDIQAIMESDSFLKYSRSKPAAMYQYIFLSFFASGNSIDDILANRDSTLEFSKRTKSKILFGRNTRYDVTAKSSFVCGIVRGKSLDKTSLVEMMWDLKKKGLIYSMEFTNLLSKNTFYLFTFTIYTDEVYDYLNTNKLFSAKCLVVSTKGDVENFSSLKKDVVIRV</sequence>
<reference key="1">
    <citation type="submission" date="1998-09" db="EMBL/GenBank/DDBJ databases">
        <title>Complete genomic sequence of vaccinia virus (Tian Tan strain).</title>
        <authorList>
            <person name="Jin Q."/>
            <person name="Hou Y.D."/>
            <person name="Cheng N.H."/>
            <person name="Yao E.M."/>
            <person name="Cheng S.X."/>
            <person name="Yang X.K."/>
            <person name="Jing D.Y."/>
            <person name="Yu W.H."/>
            <person name="Yuan J.S."/>
            <person name="Ma X.J."/>
        </authorList>
    </citation>
    <scope>NUCLEOTIDE SEQUENCE [LARGE SCALE GENOMIC DNA]</scope>
</reference>
<accession>P68493</accession>
<accession>O57194</accession>
<feature type="chain" id="PRO_0000218445" description="Metalloendopeptidase OPG085">
    <location>
        <begin position="1"/>
        <end position="591"/>
    </location>
</feature>
<feature type="active site" evidence="2">
    <location>
        <position position="44"/>
    </location>
</feature>
<feature type="binding site" evidence="2">
    <location>
        <position position="41"/>
    </location>
    <ligand>
        <name>Zn(2+)</name>
        <dbReference type="ChEBI" id="CHEBI:29105"/>
        <note>catalytic</note>
    </ligand>
</feature>
<feature type="binding site" evidence="2">
    <location>
        <position position="45"/>
    </location>
    <ligand>
        <name>Zn(2+)</name>
        <dbReference type="ChEBI" id="CHEBI:29105"/>
        <note>catalytic</note>
    </ligand>
</feature>
<dbReference type="EC" id="3.4.24.-" evidence="1"/>
<dbReference type="EMBL" id="AF095689">
    <property type="protein sequence ID" value="AAF33938.1"/>
    <property type="molecule type" value="Genomic_DNA"/>
</dbReference>
<dbReference type="SMR" id="P68493"/>
<dbReference type="MEROPS" id="M44.001"/>
<dbReference type="Proteomes" id="UP000163220">
    <property type="component" value="Genome"/>
</dbReference>
<dbReference type="GO" id="GO:0044423">
    <property type="term" value="C:virion component"/>
    <property type="evidence" value="ECO:0007669"/>
    <property type="project" value="UniProtKB-KW"/>
</dbReference>
<dbReference type="GO" id="GO:0004222">
    <property type="term" value="F:metalloendopeptidase activity"/>
    <property type="evidence" value="ECO:0007669"/>
    <property type="project" value="InterPro"/>
</dbReference>
<dbReference type="GO" id="GO:0008270">
    <property type="term" value="F:zinc ion binding"/>
    <property type="evidence" value="ECO:0007669"/>
    <property type="project" value="InterPro"/>
</dbReference>
<dbReference type="GO" id="GO:0006508">
    <property type="term" value="P:proteolysis"/>
    <property type="evidence" value="ECO:0007669"/>
    <property type="project" value="UniProtKB-KW"/>
</dbReference>
<dbReference type="GO" id="GO:0019058">
    <property type="term" value="P:viral life cycle"/>
    <property type="evidence" value="ECO:0007669"/>
    <property type="project" value="InterPro"/>
</dbReference>
<dbReference type="InterPro" id="IPR011249">
    <property type="entry name" value="Metalloenz_LuxS/M16"/>
</dbReference>
<dbReference type="InterPro" id="IPR005072">
    <property type="entry name" value="Peptidase_M44"/>
</dbReference>
<dbReference type="Pfam" id="PF03410">
    <property type="entry name" value="Peptidase_M44"/>
    <property type="match status" value="1"/>
</dbReference>
<dbReference type="PIRSF" id="PIRSF015679">
    <property type="entry name" value="Peptidase_M44"/>
    <property type="match status" value="1"/>
</dbReference>
<dbReference type="SUPFAM" id="SSF63411">
    <property type="entry name" value="LuxS/MPP-like metallohydrolase"/>
    <property type="match status" value="1"/>
</dbReference>
<organismHost>
    <name type="scientific">Homo sapiens</name>
    <name type="common">Human</name>
    <dbReference type="NCBI Taxonomy" id="9606"/>
</organismHost>
<name>PG085_VACCT</name>
<gene>
    <name type="primary">OPG085</name>
    <name type="ORF">TG1L</name>
</gene>